<protein>
    <recommendedName>
        <fullName>Auxin response factor 9</fullName>
    </recommendedName>
</protein>
<name>ARFI_ORYSJ</name>
<reference key="1">
    <citation type="journal article" date="2002" name="Nature">
        <title>Sequence and analysis of rice chromosome 4.</title>
        <authorList>
            <person name="Feng Q."/>
            <person name="Zhang Y."/>
            <person name="Hao P."/>
            <person name="Wang S."/>
            <person name="Fu G."/>
            <person name="Huang Y."/>
            <person name="Li Y."/>
            <person name="Zhu J."/>
            <person name="Liu Y."/>
            <person name="Hu X."/>
            <person name="Jia P."/>
            <person name="Zhang Y."/>
            <person name="Zhao Q."/>
            <person name="Ying K."/>
            <person name="Yu S."/>
            <person name="Tang Y."/>
            <person name="Weng Q."/>
            <person name="Zhang L."/>
            <person name="Lu Y."/>
            <person name="Mu J."/>
            <person name="Lu Y."/>
            <person name="Zhang L.S."/>
            <person name="Yu Z."/>
            <person name="Fan D."/>
            <person name="Liu X."/>
            <person name="Lu T."/>
            <person name="Li C."/>
            <person name="Wu Y."/>
            <person name="Sun T."/>
            <person name="Lei H."/>
            <person name="Li T."/>
            <person name="Hu H."/>
            <person name="Guan J."/>
            <person name="Wu M."/>
            <person name="Zhang R."/>
            <person name="Zhou B."/>
            <person name="Chen Z."/>
            <person name="Chen L."/>
            <person name="Jin Z."/>
            <person name="Wang R."/>
            <person name="Yin H."/>
            <person name="Cai Z."/>
            <person name="Ren S."/>
            <person name="Lv G."/>
            <person name="Gu W."/>
            <person name="Zhu G."/>
            <person name="Tu Y."/>
            <person name="Jia J."/>
            <person name="Zhang Y."/>
            <person name="Chen J."/>
            <person name="Kang H."/>
            <person name="Chen X."/>
            <person name="Shao C."/>
            <person name="Sun Y."/>
            <person name="Hu Q."/>
            <person name="Zhang X."/>
            <person name="Zhang W."/>
            <person name="Wang L."/>
            <person name="Ding C."/>
            <person name="Sheng H."/>
            <person name="Gu J."/>
            <person name="Chen S."/>
            <person name="Ni L."/>
            <person name="Zhu F."/>
            <person name="Chen W."/>
            <person name="Lan L."/>
            <person name="Lai Y."/>
            <person name="Cheng Z."/>
            <person name="Gu M."/>
            <person name="Jiang J."/>
            <person name="Li J."/>
            <person name="Hong G."/>
            <person name="Xue Y."/>
            <person name="Han B."/>
        </authorList>
    </citation>
    <scope>NUCLEOTIDE SEQUENCE [LARGE SCALE GENOMIC DNA]</scope>
    <source>
        <strain>cv. Nipponbare</strain>
    </source>
</reference>
<reference key="2">
    <citation type="journal article" date="2005" name="Nature">
        <title>The map-based sequence of the rice genome.</title>
        <authorList>
            <consortium name="International rice genome sequencing project (IRGSP)"/>
        </authorList>
    </citation>
    <scope>NUCLEOTIDE SEQUENCE [LARGE SCALE GENOMIC DNA]</scope>
    <source>
        <strain>cv. Nipponbare</strain>
    </source>
</reference>
<reference key="3">
    <citation type="journal article" date="2008" name="Nucleic Acids Res.">
        <title>The rice annotation project database (RAP-DB): 2008 update.</title>
        <authorList>
            <consortium name="The rice annotation project (RAP)"/>
        </authorList>
    </citation>
    <scope>GENOME REANNOTATION</scope>
    <source>
        <strain>cv. Nipponbare</strain>
    </source>
</reference>
<reference key="4">
    <citation type="journal article" date="2013" name="Rice">
        <title>Improvement of the Oryza sativa Nipponbare reference genome using next generation sequence and optical map data.</title>
        <authorList>
            <person name="Kawahara Y."/>
            <person name="de la Bastide M."/>
            <person name="Hamilton J.P."/>
            <person name="Kanamori H."/>
            <person name="McCombie W.R."/>
            <person name="Ouyang S."/>
            <person name="Schwartz D.C."/>
            <person name="Tanaka T."/>
            <person name="Wu J."/>
            <person name="Zhou S."/>
            <person name="Childs K.L."/>
            <person name="Davidson R.M."/>
            <person name="Lin H."/>
            <person name="Quesada-Ocampo L."/>
            <person name="Vaillancourt B."/>
            <person name="Sakai H."/>
            <person name="Lee S.S."/>
            <person name="Kim J."/>
            <person name="Numa H."/>
            <person name="Itoh T."/>
            <person name="Buell C.R."/>
            <person name="Matsumoto T."/>
        </authorList>
    </citation>
    <scope>GENOME REANNOTATION</scope>
    <source>
        <strain>cv. Nipponbare</strain>
    </source>
</reference>
<reference key="5">
    <citation type="journal article" date="2003" name="Science">
        <title>Collection, mapping, and annotation of over 28,000 cDNA clones from japonica rice.</title>
        <authorList>
            <consortium name="The rice full-length cDNA consortium"/>
        </authorList>
    </citation>
    <scope>NUCLEOTIDE SEQUENCE [LARGE SCALE MRNA]</scope>
    <source>
        <strain>cv. Nipponbare</strain>
    </source>
</reference>
<reference key="6">
    <citation type="journal article" date="2007" name="Gene">
        <title>Genome-wide analysis of the auxin response factors (ARF) gene family in rice (Oryza sativa).</title>
        <authorList>
            <person name="Wang D."/>
            <person name="Pei K."/>
            <person name="Fu Y."/>
            <person name="Sun Z."/>
            <person name="Li S."/>
            <person name="Liu H."/>
            <person name="Tang K."/>
            <person name="Han B."/>
            <person name="Tao Y."/>
        </authorList>
    </citation>
    <scope>GENE FAMILY</scope>
    <scope>TISSUE SPECIFICITY</scope>
    <scope>NOMENCLATURE</scope>
</reference>
<sequence>MAAAMEMAANPGGSGTCSDALFRELWHACAGPLVTVPKRGERVYYFPQGHMEQLEASTNQQLDQYLPMFNLPSKILCSVVNVELRAEADSDEVYAQIMLQPEADQSELTSLDPELQDLEKCTAHSFCKTLTASDTSTHGGFSVLRRHAEECLPQLDMSQNPPCQELVAKDLHGTEWHFRHIFRGQPRRHLLTTGWSVFVSSKRLVAGDAFIFLRGESGELRVGVRRLMRQVNNMPSSVISSHSMHLGVLATASHAISTGTLFSVFYKPRTSRSEFVVSVNKYLEAKKQNLSVGMRFKMRFEGDEAPERRFSGTIIGIGSVPAMSKSPWADSDWKSLKVQWDEPSAIVRPDRVSPWELEPLDASNPQPPQPPLRNKRARPPASPSVVAELPPSFGLWKPPSEAAQTLSFSEPQRAREIFPSIPASIFSASSHVEFNSKNEPSILSNQFYWSMRDSKTDSFSASTNKTRVERKQEPTTMGCRLFGIEISSAVEEALPAATVSGVGYDQTVLSVDVDSDQISQPSNGNKSDAPGTSSERSPLESQSRQVRSCTKVIMQGMAVGRAVDLTKLNGYGDLRSKLEEMFDIQGDLCPTLKRWQVVYTDDEDDMMLVGDDPWDEFCSMVKRIYIYSYEEAKLLAPKSKLPVIGDTIKLSSMNSSHESVDLDNHASVTNRDC</sequence>
<keyword id="KW-0927">Auxin signaling pathway</keyword>
<keyword id="KW-0238">DNA-binding</keyword>
<keyword id="KW-0539">Nucleus</keyword>
<keyword id="KW-1185">Reference proteome</keyword>
<keyword id="KW-0804">Transcription</keyword>
<keyword id="KW-0805">Transcription regulation</keyword>
<evidence type="ECO:0000250" key="1"/>
<evidence type="ECO:0000255" key="2">
    <source>
        <dbReference type="PROSITE-ProRule" id="PRU00326"/>
    </source>
</evidence>
<evidence type="ECO:0000255" key="3">
    <source>
        <dbReference type="PROSITE-ProRule" id="PRU01081"/>
    </source>
</evidence>
<evidence type="ECO:0000256" key="4">
    <source>
        <dbReference type="SAM" id="MobiDB-lite"/>
    </source>
</evidence>
<evidence type="ECO:0000269" key="5">
    <source>
    </source>
</evidence>
<evidence type="ECO:0000305" key="6"/>
<organism>
    <name type="scientific">Oryza sativa subsp. japonica</name>
    <name type="common">Rice</name>
    <dbReference type="NCBI Taxonomy" id="39947"/>
    <lineage>
        <taxon>Eukaryota</taxon>
        <taxon>Viridiplantae</taxon>
        <taxon>Streptophyta</taxon>
        <taxon>Embryophyta</taxon>
        <taxon>Tracheophyta</taxon>
        <taxon>Spermatophyta</taxon>
        <taxon>Magnoliopsida</taxon>
        <taxon>Liliopsida</taxon>
        <taxon>Poales</taxon>
        <taxon>Poaceae</taxon>
        <taxon>BOP clade</taxon>
        <taxon>Oryzoideae</taxon>
        <taxon>Oryzeae</taxon>
        <taxon>Oryzinae</taxon>
        <taxon>Oryza</taxon>
        <taxon>Oryza sativa</taxon>
    </lineage>
</organism>
<proteinExistence type="evidence at transcript level"/>
<dbReference type="EMBL" id="AL662973">
    <property type="protein sequence ID" value="CAE04227.2"/>
    <property type="status" value="ALT_INIT"/>
    <property type="molecule type" value="Genomic_DNA"/>
</dbReference>
<dbReference type="EMBL" id="AP008210">
    <property type="protein sequence ID" value="BAF14793.1"/>
    <property type="molecule type" value="Genomic_DNA"/>
</dbReference>
<dbReference type="EMBL" id="AP014960">
    <property type="protein sequence ID" value="BAS89354.1"/>
    <property type="molecule type" value="Genomic_DNA"/>
</dbReference>
<dbReference type="EMBL" id="AK064925">
    <property type="status" value="NOT_ANNOTATED_CDS"/>
    <property type="molecule type" value="mRNA"/>
</dbReference>
<dbReference type="RefSeq" id="XP_015636800.1">
    <property type="nucleotide sequence ID" value="XM_015781314.1"/>
</dbReference>
<dbReference type="SMR" id="Q0JCZ4"/>
<dbReference type="FunCoup" id="Q0JCZ4">
    <property type="interactions" value="2755"/>
</dbReference>
<dbReference type="STRING" id="39947.Q0JCZ4"/>
<dbReference type="PaxDb" id="39947-Q0JCZ4"/>
<dbReference type="EnsemblPlants" id="Os04t0442000-01">
    <property type="protein sequence ID" value="Os04t0442000-01"/>
    <property type="gene ID" value="Os04g0442000"/>
</dbReference>
<dbReference type="Gramene" id="Os04t0442000-01">
    <property type="protein sequence ID" value="Os04t0442000-01"/>
    <property type="gene ID" value="Os04g0442000"/>
</dbReference>
<dbReference type="KEGG" id="dosa:Os04g0442000"/>
<dbReference type="eggNOG" id="ENOG502QQSN">
    <property type="taxonomic scope" value="Eukaryota"/>
</dbReference>
<dbReference type="HOGENOM" id="CLU_002626_4_4_1"/>
<dbReference type="InParanoid" id="Q0JCZ4"/>
<dbReference type="OMA" id="FGLWKPP"/>
<dbReference type="OrthoDB" id="1050118at2759"/>
<dbReference type="PlantReactome" id="R-OSA-5608118">
    <property type="pathway name" value="Auxin signalling"/>
</dbReference>
<dbReference type="Proteomes" id="UP000000763">
    <property type="component" value="Chromosome 4"/>
</dbReference>
<dbReference type="Proteomes" id="UP000059680">
    <property type="component" value="Chromosome 4"/>
</dbReference>
<dbReference type="GO" id="GO:0005634">
    <property type="term" value="C:nucleus"/>
    <property type="evidence" value="ECO:0007669"/>
    <property type="project" value="UniProtKB-SubCell"/>
</dbReference>
<dbReference type="GO" id="GO:0003677">
    <property type="term" value="F:DNA binding"/>
    <property type="evidence" value="ECO:0007669"/>
    <property type="project" value="UniProtKB-KW"/>
</dbReference>
<dbReference type="GO" id="GO:0009734">
    <property type="term" value="P:auxin-activated signaling pathway"/>
    <property type="evidence" value="ECO:0007669"/>
    <property type="project" value="UniProtKB-KW"/>
</dbReference>
<dbReference type="GO" id="GO:0006355">
    <property type="term" value="P:regulation of DNA-templated transcription"/>
    <property type="evidence" value="ECO:0007669"/>
    <property type="project" value="InterPro"/>
</dbReference>
<dbReference type="CDD" id="cd10017">
    <property type="entry name" value="B3_DNA"/>
    <property type="match status" value="1"/>
</dbReference>
<dbReference type="FunFam" id="2.30.30.1040:FF:000001">
    <property type="entry name" value="Auxin response factor"/>
    <property type="match status" value="1"/>
</dbReference>
<dbReference type="FunFam" id="2.40.330.10:FF:000001">
    <property type="entry name" value="Auxin response factor"/>
    <property type="match status" value="1"/>
</dbReference>
<dbReference type="FunFam" id="3.10.20.90:FF:000047">
    <property type="entry name" value="Auxin response factor"/>
    <property type="match status" value="1"/>
</dbReference>
<dbReference type="Gene3D" id="2.30.30.1040">
    <property type="match status" value="1"/>
</dbReference>
<dbReference type="Gene3D" id="2.40.330.10">
    <property type="entry name" value="DNA-binding pseudobarrel domain"/>
    <property type="match status" value="1"/>
</dbReference>
<dbReference type="Gene3D" id="3.10.20.90">
    <property type="entry name" value="Phosphatidylinositol 3-kinase Catalytic Subunit, Chain A, domain 1"/>
    <property type="match status" value="1"/>
</dbReference>
<dbReference type="InterPro" id="IPR010525">
    <property type="entry name" value="ARF_dom"/>
</dbReference>
<dbReference type="InterPro" id="IPR044835">
    <property type="entry name" value="ARF_plant"/>
</dbReference>
<dbReference type="InterPro" id="IPR033389">
    <property type="entry name" value="AUX/IAA_dom"/>
</dbReference>
<dbReference type="InterPro" id="IPR003340">
    <property type="entry name" value="B3_DNA-bd"/>
</dbReference>
<dbReference type="InterPro" id="IPR015300">
    <property type="entry name" value="DNA-bd_pseudobarrel_sf"/>
</dbReference>
<dbReference type="InterPro" id="IPR053793">
    <property type="entry name" value="PB1-like"/>
</dbReference>
<dbReference type="PANTHER" id="PTHR31384">
    <property type="entry name" value="AUXIN RESPONSE FACTOR 4-RELATED"/>
    <property type="match status" value="1"/>
</dbReference>
<dbReference type="PANTHER" id="PTHR31384:SF146">
    <property type="entry name" value="AUXIN RESPONSE FACTOR 9"/>
    <property type="match status" value="1"/>
</dbReference>
<dbReference type="Pfam" id="PF06507">
    <property type="entry name" value="ARF_AD"/>
    <property type="match status" value="1"/>
</dbReference>
<dbReference type="Pfam" id="PF02309">
    <property type="entry name" value="AUX_IAA"/>
    <property type="match status" value="1"/>
</dbReference>
<dbReference type="Pfam" id="PF02362">
    <property type="entry name" value="B3"/>
    <property type="match status" value="1"/>
</dbReference>
<dbReference type="SMART" id="SM01019">
    <property type="entry name" value="B3"/>
    <property type="match status" value="1"/>
</dbReference>
<dbReference type="SUPFAM" id="SSF54277">
    <property type="entry name" value="CAD &amp; PB1 domains"/>
    <property type="match status" value="1"/>
</dbReference>
<dbReference type="SUPFAM" id="SSF101936">
    <property type="entry name" value="DNA-binding pseudobarrel domain"/>
    <property type="match status" value="1"/>
</dbReference>
<dbReference type="PROSITE" id="PS50863">
    <property type="entry name" value="B3"/>
    <property type="match status" value="1"/>
</dbReference>
<dbReference type="PROSITE" id="PS51745">
    <property type="entry name" value="PB1"/>
    <property type="match status" value="1"/>
</dbReference>
<gene>
    <name type="primary">ARF9</name>
    <name type="ordered locus">Os04g0442000</name>
    <name type="ordered locus">LOC_Os04g36054</name>
    <name type="ORF">OSJNBa0064D20.11</name>
</gene>
<accession>Q0JCZ4</accession>
<accession>A0A0P0WAR6</accession>
<accession>Q7XN92</accession>
<feature type="chain" id="PRO_0000299263" description="Auxin response factor 9">
    <location>
        <begin position="1"/>
        <end position="673"/>
    </location>
</feature>
<feature type="domain" description="PB1" evidence="3">
    <location>
        <begin position="547"/>
        <end position="639"/>
    </location>
</feature>
<feature type="DNA-binding region" description="TF-B3" evidence="2">
    <location>
        <begin position="126"/>
        <end position="228"/>
    </location>
</feature>
<feature type="region of interest" description="Disordered" evidence="4">
    <location>
        <begin position="356"/>
        <end position="386"/>
    </location>
</feature>
<feature type="region of interest" description="Disordered" evidence="4">
    <location>
        <begin position="514"/>
        <end position="545"/>
    </location>
</feature>
<feature type="compositionally biased region" description="Polar residues" evidence="4">
    <location>
        <begin position="516"/>
        <end position="545"/>
    </location>
</feature>
<feature type="sequence conflict" description="In Ref. 5; AK064925." evidence="6" ref="5">
    <original>L</original>
    <variation>F</variation>
    <location>
        <position position="152"/>
    </location>
</feature>
<comment type="function">
    <text>Auxin response factors (ARFs) are transcriptional factors that bind specifically to the DNA sequence 5'-TGTCTC-3' found in the auxin-responsive promoter elements (AuxREs).</text>
</comment>
<comment type="subunit">
    <text evidence="1">Homodimers and heterodimers.</text>
</comment>
<comment type="subcellular location">
    <subcellularLocation>
        <location evidence="2">Nucleus</location>
    </subcellularLocation>
</comment>
<comment type="tissue specificity">
    <text evidence="5">Expressed in roots, culms, leaves and young panicles.</text>
</comment>
<comment type="domain">
    <text>Interactions between auxin response factors (ARFs) and Aux/IAA proteins occur through their C-terminal dimerization domains III and IV.</text>
</comment>
<comment type="similarity">
    <text evidence="6">Belongs to the ARF family.</text>
</comment>
<comment type="sequence caution" evidence="6">
    <conflict type="erroneous initiation">
        <sequence resource="EMBL-CDS" id="CAE04227"/>
    </conflict>
</comment>